<comment type="function">
    <text evidence="2 3">Component of the coat protein complex II (COPII) which promotes the formation of transport vesicles from the endoplasmic reticulum (ER) (By similarity). The coat has two main functions, the physical deformation of the endoplasmic reticulum membrane into vesicles and the selection of cargo molecules (By similarity). May contribute to COPII-coated vesicles formation and ER-Golgi vesicle transport (PubMed:29390074). Together with SEC23A, essential for pollen wall development and exine patterning, probably by regulating endoplasmic reticulum (ER) export of lipids and proteins (e.g. sporopollenin) necessary for pollen wall formation (PubMed:29390074). Also involved in plastid physiology in anther tapetal cells (PubMed:29390074).</text>
</comment>
<comment type="subunit">
    <text evidence="1">Component of the coat protein complex II (COPII), composed of at least five proteins: the Sec23/24 complex, the Sec13/31 complex and Sar1.</text>
</comment>
<comment type="subcellular location">
    <subcellularLocation>
        <location evidence="3">Cytoplasmic vesicle</location>
        <location evidence="3">COPII-coated vesicle membrane</location>
        <topology evidence="2">Peripheral membrane protein</topology>
        <orientation evidence="2">Cytoplasmic side</orientation>
    </subcellularLocation>
    <subcellularLocation>
        <location evidence="3">Endoplasmic reticulum membrane</location>
        <topology evidence="2">Peripheral membrane protein</topology>
        <orientation evidence="2">Cytoplasmic side</orientation>
    </subcellularLocation>
    <subcellularLocation>
        <location evidence="2">Membrane</location>
        <topology evidence="2">Peripheral membrane protein</topology>
        <orientation evidence="2">Cytoplasmic side</orientation>
    </subcellularLocation>
    <text evidence="3">Observed at endoplasmic reticulum exit sites (ERESs), characteristic for COPII-coated vesicles localization.</text>
</comment>
<comment type="tissue specificity">
    <text evidence="3">Mostly expressed in closed floral bud, pollen and flowers, and, to a lower extent, in mature siliques, roots and leaf primordia.</text>
</comment>
<comment type="developmental stage">
    <text evidence="3">In floral organs, only observed in buds, pollen grains, pollen tubes and fertilized ovules (PubMed:29390074). Highly expressed in the anther tapetum at uninucleate and bicellular stages (PubMed:29390074).</text>
</comment>
<comment type="disruption phenotype">
    <text evidence="3">Despite normal fertility, impaired pollen coat exine pattern formation with reduced sporopollenin levels (PubMed:29390074). Plants lacking both SEC23A and SEC23D are semi-sterile and exhibit developmental defects in pollen (especially at the late uninucleate stage) and tapetal cells, including defective exine and intine, as well as signs of cell degeneration and structural abnormalities in organelles of the male gametophytes (PubMed:29390074).</text>
</comment>
<comment type="similarity">
    <text evidence="8">Belongs to the SEC23/SEC24 family. SEC24 subfamily.</text>
</comment>
<name>SC23D_ARATH</name>
<accession>Q9ZQH3</accession>
<evidence type="ECO:0000250" key="1">
    <source>
        <dbReference type="UniProtKB" id="O95486"/>
    </source>
</evidence>
<evidence type="ECO:0000250" key="2">
    <source>
        <dbReference type="UniProtKB" id="P15303"/>
    </source>
</evidence>
<evidence type="ECO:0000269" key="3">
    <source>
    </source>
</evidence>
<evidence type="ECO:0000303" key="4">
    <source>
    </source>
</evidence>
<evidence type="ECO:0000303" key="5">
    <source>
    </source>
</evidence>
<evidence type="ECO:0000303" key="6">
    <source>
    </source>
</evidence>
<evidence type="ECO:0000303" key="7">
    <source>
    </source>
</evidence>
<evidence type="ECO:0000305" key="8"/>
<evidence type="ECO:0000312" key="9">
    <source>
        <dbReference type="Araport" id="AT2G27460"/>
    </source>
</evidence>
<evidence type="ECO:0000312" key="10">
    <source>
        <dbReference type="EMBL" id="AAD15598.1"/>
    </source>
</evidence>
<protein>
    <recommendedName>
        <fullName evidence="6 7">Protein transport protein SEC23 D</fullName>
        <shortName evidence="7">AtSEC23D</shortName>
    </recommendedName>
    <alternativeName>
        <fullName evidence="4">Protein transport protein SEC23/SEC24-like 1</fullName>
        <shortName evidence="4">AtSec23/Sec24L1</shortName>
    </alternativeName>
    <alternativeName>
        <fullName evidence="5">Protein transport protein SEC24 D</fullName>
    </alternativeName>
</protein>
<keyword id="KW-0968">Cytoplasmic vesicle</keyword>
<keyword id="KW-0256">Endoplasmic reticulum</keyword>
<keyword id="KW-0472">Membrane</keyword>
<keyword id="KW-0479">Metal-binding</keyword>
<keyword id="KW-0653">Protein transport</keyword>
<keyword id="KW-1185">Reference proteome</keyword>
<keyword id="KW-0813">Transport</keyword>
<keyword id="KW-0862">Zinc</keyword>
<organism>
    <name type="scientific">Arabidopsis thaliana</name>
    <name type="common">Mouse-ear cress</name>
    <dbReference type="NCBI Taxonomy" id="3702"/>
    <lineage>
        <taxon>Eukaryota</taxon>
        <taxon>Viridiplantae</taxon>
        <taxon>Streptophyta</taxon>
        <taxon>Embryophyta</taxon>
        <taxon>Tracheophyta</taxon>
        <taxon>Spermatophyta</taxon>
        <taxon>Magnoliopsida</taxon>
        <taxon>eudicotyledons</taxon>
        <taxon>Gunneridae</taxon>
        <taxon>Pentapetalae</taxon>
        <taxon>rosids</taxon>
        <taxon>malvids</taxon>
        <taxon>Brassicales</taxon>
        <taxon>Brassicaceae</taxon>
        <taxon>Camelineae</taxon>
        <taxon>Arabidopsis</taxon>
    </lineage>
</organism>
<feature type="chain" id="PRO_0000457104" description="Protein transport protein SEC23 D">
    <location>
        <begin position="1"/>
        <end position="745"/>
    </location>
</feature>
<feature type="region of interest" description="Zinc finger-like" evidence="1">
    <location>
        <begin position="53"/>
        <end position="76"/>
    </location>
</feature>
<feature type="binding site" evidence="1">
    <location>
        <position position="53"/>
    </location>
    <ligand>
        <name>Zn(2+)</name>
        <dbReference type="ChEBI" id="CHEBI:29105"/>
    </ligand>
</feature>
<feature type="binding site" evidence="1">
    <location>
        <position position="56"/>
    </location>
    <ligand>
        <name>Zn(2+)</name>
        <dbReference type="ChEBI" id="CHEBI:29105"/>
    </ligand>
</feature>
<feature type="binding site" evidence="1">
    <location>
        <position position="73"/>
    </location>
    <ligand>
        <name>Zn(2+)</name>
        <dbReference type="ChEBI" id="CHEBI:29105"/>
    </ligand>
</feature>
<feature type="binding site" evidence="1">
    <location>
        <position position="76"/>
    </location>
    <ligand>
        <name>Zn(2+)</name>
        <dbReference type="ChEBI" id="CHEBI:29105"/>
    </ligand>
</feature>
<sequence length="745" mass="82585">MAVRATVSRFPIDSDAQEASGLPWGLTVTPFAAKDENGIGPACGSNGHLLPRCENCYAYFNTYCELDQWAWNCSLCGTLNGLPSDAIARYSNPHSIPEMTSSFIDLEMPLDGSEEEMTQARPVYVAAIDISSSEEFLELTKSALLAALEALSPGALFGLVTFSHKIGLYDVQGPIPVVKNVFIPPDGESSLSLELEDVMPLLQFLAPVETCKDRIAAALETLRPITSWERSAGAGQGMDSVLMGGRGFGTAMEALFNYLGSEFGNTFALARVFAFLSGPPDYGRGQLDTSRYGEQYASKRVDADRALLPEQTPFYKDLATIAVQSGVCVDLFAVTNEYTDLASLKFLSIESGGSLFLYSSTDDSTLPQDMFRMLNRPYAFNCVLRLRTSTEFKPGNSFGHFFPDPQYENLQHIICCDSYATYAYDFEFADNTGFSRHSGEQPVVQIAFQYTVVVPPEGLSNSEMSSSSRGKHTLQRRLRIRTMQFGTAHNINEIYDSVDHEVVLSLLVHKVILASLEDGVREGRALLHDWLVILTAQYNDAFNLVQYKNGNKSMSSQIDITFSQCPQLEPLPRLVFALLRNPLLRFHEEGVHPDYRIYLQCLFSVLDPSSLHCGIYPALMSYSTPDTLAYPRHSLSRAALITSGSPIFFLDAYTTLIVFYSSTADPSIPFPPPQDCLLRQTINKVKQERSITPKLVFIRGGRDDATVFENYLIEEQDVDGNGFASAMGFVSFLDDISQRVTEYMK</sequence>
<gene>
    <name evidence="6 7" type="primary">SEC23D</name>
    <name evidence="5" type="synonym">SEC24D</name>
    <name evidence="9" type="ordered locus">At2g27460</name>
    <name evidence="10" type="ORF">F10A12.14</name>
</gene>
<dbReference type="EMBL" id="AC006232">
    <property type="protein sequence ID" value="AAD15598.1"/>
    <property type="molecule type" value="Genomic_DNA"/>
</dbReference>
<dbReference type="EMBL" id="CP002685">
    <property type="protein sequence ID" value="AEC07999.1"/>
    <property type="molecule type" value="Genomic_DNA"/>
</dbReference>
<dbReference type="EMBL" id="AY054495">
    <property type="protein sequence ID" value="AAK96686.1"/>
    <property type="molecule type" value="mRNA"/>
</dbReference>
<dbReference type="EMBL" id="BT010339">
    <property type="protein sequence ID" value="AAQ56782.1"/>
    <property type="molecule type" value="mRNA"/>
</dbReference>
<dbReference type="PIR" id="B84673">
    <property type="entry name" value="B84673"/>
</dbReference>
<dbReference type="RefSeq" id="NP_565651.1">
    <property type="nucleotide sequence ID" value="NM_128306.4"/>
</dbReference>
<dbReference type="SMR" id="Q9ZQH3"/>
<dbReference type="FunCoup" id="Q9ZQH3">
    <property type="interactions" value="2825"/>
</dbReference>
<dbReference type="STRING" id="3702.Q9ZQH3"/>
<dbReference type="PaxDb" id="3702-AT2G27460.1"/>
<dbReference type="ProMEX" id="Q9ZQH3"/>
<dbReference type="ProteomicsDB" id="177569"/>
<dbReference type="EnsemblPlants" id="AT2G27460.1">
    <property type="protein sequence ID" value="AT2G27460.1"/>
    <property type="gene ID" value="AT2G27460"/>
</dbReference>
<dbReference type="GeneID" id="817291"/>
<dbReference type="Gramene" id="AT2G27460.1">
    <property type="protein sequence ID" value="AT2G27460.1"/>
    <property type="gene ID" value="AT2G27460"/>
</dbReference>
<dbReference type="KEGG" id="ath:AT2G27460"/>
<dbReference type="Araport" id="AT2G27460"/>
<dbReference type="TAIR" id="AT2G27460">
    <property type="gene designation" value="ATSEC23D"/>
</dbReference>
<dbReference type="eggNOG" id="KOG1985">
    <property type="taxonomic scope" value="Eukaryota"/>
</dbReference>
<dbReference type="HOGENOM" id="CLU_023158_0_0_1"/>
<dbReference type="InParanoid" id="Q9ZQH3"/>
<dbReference type="OMA" id="GTAHNIN"/>
<dbReference type="OrthoDB" id="49016at2759"/>
<dbReference type="PRO" id="PR:Q9ZQH3"/>
<dbReference type="Proteomes" id="UP000006548">
    <property type="component" value="Chromosome 2"/>
</dbReference>
<dbReference type="ExpressionAtlas" id="Q9ZQH3">
    <property type="expression patterns" value="baseline and differential"/>
</dbReference>
<dbReference type="GO" id="GO:0030127">
    <property type="term" value="C:COPII vesicle coat"/>
    <property type="evidence" value="ECO:0007669"/>
    <property type="project" value="InterPro"/>
</dbReference>
<dbReference type="GO" id="GO:0005737">
    <property type="term" value="C:cytoplasm"/>
    <property type="evidence" value="ECO:0000314"/>
    <property type="project" value="TAIR"/>
</dbReference>
<dbReference type="GO" id="GO:0070971">
    <property type="term" value="C:endoplasmic reticulum exit site"/>
    <property type="evidence" value="ECO:0000314"/>
    <property type="project" value="TAIR"/>
</dbReference>
<dbReference type="GO" id="GO:0005789">
    <property type="term" value="C:endoplasmic reticulum membrane"/>
    <property type="evidence" value="ECO:0007669"/>
    <property type="project" value="UniProtKB-SubCell"/>
</dbReference>
<dbReference type="GO" id="GO:0008270">
    <property type="term" value="F:zinc ion binding"/>
    <property type="evidence" value="ECO:0007669"/>
    <property type="project" value="InterPro"/>
</dbReference>
<dbReference type="GO" id="GO:0048658">
    <property type="term" value="P:anther wall tapetum development"/>
    <property type="evidence" value="ECO:0000315"/>
    <property type="project" value="TAIR"/>
</dbReference>
<dbReference type="GO" id="GO:0006888">
    <property type="term" value="P:endoplasmic reticulum to Golgi vesicle-mediated transport"/>
    <property type="evidence" value="ECO:0007669"/>
    <property type="project" value="InterPro"/>
</dbReference>
<dbReference type="GO" id="GO:0006886">
    <property type="term" value="P:intracellular protein transport"/>
    <property type="evidence" value="ECO:0007669"/>
    <property type="project" value="InterPro"/>
</dbReference>
<dbReference type="GO" id="GO:0010584">
    <property type="term" value="P:pollen exine formation"/>
    <property type="evidence" value="ECO:0000315"/>
    <property type="project" value="TAIR"/>
</dbReference>
<dbReference type="Gene3D" id="1.20.120.730">
    <property type="entry name" value="Sec23/Sec24 helical domain"/>
    <property type="match status" value="1"/>
</dbReference>
<dbReference type="Gene3D" id="3.40.50.410">
    <property type="entry name" value="von Willebrand factor, type A domain"/>
    <property type="match status" value="1"/>
</dbReference>
<dbReference type="Gene3D" id="2.30.30.380">
    <property type="entry name" value="Zn-finger domain of Sec23/24"/>
    <property type="match status" value="1"/>
</dbReference>
<dbReference type="InterPro" id="IPR006900">
    <property type="entry name" value="Sec23/24_helical_dom"/>
</dbReference>
<dbReference type="InterPro" id="IPR036175">
    <property type="entry name" value="Sec23/24_helical_dom_sf"/>
</dbReference>
<dbReference type="InterPro" id="IPR006896">
    <property type="entry name" value="Sec23/24_trunk_dom"/>
</dbReference>
<dbReference type="InterPro" id="IPR050550">
    <property type="entry name" value="SEC23_SEC24_subfamily"/>
</dbReference>
<dbReference type="InterPro" id="IPR036465">
    <property type="entry name" value="vWFA_dom_sf"/>
</dbReference>
<dbReference type="InterPro" id="IPR006895">
    <property type="entry name" value="Znf_Sec23_Sec24"/>
</dbReference>
<dbReference type="InterPro" id="IPR036174">
    <property type="entry name" value="Znf_Sec23_Sec24_sf"/>
</dbReference>
<dbReference type="PANTHER" id="PTHR13803:SF17">
    <property type="entry name" value="PROTEIN TRANSPORT PROTEIN SEC24"/>
    <property type="match status" value="1"/>
</dbReference>
<dbReference type="PANTHER" id="PTHR13803">
    <property type="entry name" value="SEC24-RELATED PROTEIN"/>
    <property type="match status" value="1"/>
</dbReference>
<dbReference type="Pfam" id="PF04815">
    <property type="entry name" value="Sec23_helical"/>
    <property type="match status" value="1"/>
</dbReference>
<dbReference type="Pfam" id="PF04811">
    <property type="entry name" value="Sec23_trunk"/>
    <property type="match status" value="1"/>
</dbReference>
<dbReference type="Pfam" id="PF04810">
    <property type="entry name" value="zf-Sec23_Sec24"/>
    <property type="match status" value="1"/>
</dbReference>
<dbReference type="SUPFAM" id="SSF81995">
    <property type="entry name" value="beta-sandwich domain of Sec23/24"/>
    <property type="match status" value="1"/>
</dbReference>
<dbReference type="SUPFAM" id="SSF81811">
    <property type="entry name" value="Helical domain of Sec23/24"/>
    <property type="match status" value="1"/>
</dbReference>
<dbReference type="SUPFAM" id="SSF53300">
    <property type="entry name" value="vWA-like"/>
    <property type="match status" value="1"/>
</dbReference>
<dbReference type="SUPFAM" id="SSF82919">
    <property type="entry name" value="Zn-finger domain of Sec23/24"/>
    <property type="match status" value="1"/>
</dbReference>
<proteinExistence type="evidence at transcript level"/>
<reference key="1">
    <citation type="journal article" date="1999" name="Nature">
        <title>Sequence and analysis of chromosome 2 of the plant Arabidopsis thaliana.</title>
        <authorList>
            <person name="Lin X."/>
            <person name="Kaul S."/>
            <person name="Rounsley S.D."/>
            <person name="Shea T.P."/>
            <person name="Benito M.-I."/>
            <person name="Town C.D."/>
            <person name="Fujii C.Y."/>
            <person name="Mason T.M."/>
            <person name="Bowman C.L."/>
            <person name="Barnstead M.E."/>
            <person name="Feldblyum T.V."/>
            <person name="Buell C.R."/>
            <person name="Ketchum K.A."/>
            <person name="Lee J.J."/>
            <person name="Ronning C.M."/>
            <person name="Koo H.L."/>
            <person name="Moffat K.S."/>
            <person name="Cronin L.A."/>
            <person name="Shen M."/>
            <person name="Pai G."/>
            <person name="Van Aken S."/>
            <person name="Umayam L."/>
            <person name="Tallon L.J."/>
            <person name="Gill J.E."/>
            <person name="Adams M.D."/>
            <person name="Carrera A.J."/>
            <person name="Creasy T.H."/>
            <person name="Goodman H.M."/>
            <person name="Somerville C.R."/>
            <person name="Copenhaver G.P."/>
            <person name="Preuss D."/>
            <person name="Nierman W.C."/>
            <person name="White O."/>
            <person name="Eisen J.A."/>
            <person name="Salzberg S.L."/>
            <person name="Fraser C.M."/>
            <person name="Venter J.C."/>
        </authorList>
    </citation>
    <scope>NUCLEOTIDE SEQUENCE [LARGE SCALE GENOMIC DNA]</scope>
    <source>
        <strain>cv. Columbia</strain>
    </source>
</reference>
<reference key="2">
    <citation type="journal article" date="2017" name="Plant J.">
        <title>Araport11: a complete reannotation of the Arabidopsis thaliana reference genome.</title>
        <authorList>
            <person name="Cheng C.Y."/>
            <person name="Krishnakumar V."/>
            <person name="Chan A.P."/>
            <person name="Thibaud-Nissen F."/>
            <person name="Schobel S."/>
            <person name="Town C.D."/>
        </authorList>
    </citation>
    <scope>GENOME REANNOTATION</scope>
    <source>
        <strain>cv. Columbia</strain>
    </source>
</reference>
<reference key="3">
    <citation type="journal article" date="2003" name="Science">
        <title>Empirical analysis of transcriptional activity in the Arabidopsis genome.</title>
        <authorList>
            <person name="Yamada K."/>
            <person name="Lim J."/>
            <person name="Dale J.M."/>
            <person name="Chen H."/>
            <person name="Shinn P."/>
            <person name="Palm C.J."/>
            <person name="Southwick A.M."/>
            <person name="Wu H.C."/>
            <person name="Kim C.J."/>
            <person name="Nguyen M."/>
            <person name="Pham P.K."/>
            <person name="Cheuk R.F."/>
            <person name="Karlin-Newmann G."/>
            <person name="Liu S.X."/>
            <person name="Lam B."/>
            <person name="Sakano H."/>
            <person name="Wu T."/>
            <person name="Yu G."/>
            <person name="Miranda M."/>
            <person name="Quach H.L."/>
            <person name="Tripp M."/>
            <person name="Chang C.H."/>
            <person name="Lee J.M."/>
            <person name="Toriumi M.J."/>
            <person name="Chan M.M."/>
            <person name="Tang C.C."/>
            <person name="Onodera C.S."/>
            <person name="Deng J.M."/>
            <person name="Akiyama K."/>
            <person name="Ansari Y."/>
            <person name="Arakawa T."/>
            <person name="Banh J."/>
            <person name="Banno F."/>
            <person name="Bowser L."/>
            <person name="Brooks S.Y."/>
            <person name="Carninci P."/>
            <person name="Chao Q."/>
            <person name="Choy N."/>
            <person name="Enju A."/>
            <person name="Goldsmith A.D."/>
            <person name="Gurjal M."/>
            <person name="Hansen N.F."/>
            <person name="Hayashizaki Y."/>
            <person name="Johnson-Hopson C."/>
            <person name="Hsuan V.W."/>
            <person name="Iida K."/>
            <person name="Karnes M."/>
            <person name="Khan S."/>
            <person name="Koesema E."/>
            <person name="Ishida J."/>
            <person name="Jiang P.X."/>
            <person name="Jones T."/>
            <person name="Kawai J."/>
            <person name="Kamiya A."/>
            <person name="Meyers C."/>
            <person name="Nakajima M."/>
            <person name="Narusaka M."/>
            <person name="Seki M."/>
            <person name="Sakurai T."/>
            <person name="Satou M."/>
            <person name="Tamse R."/>
            <person name="Vaysberg M."/>
            <person name="Wallender E.K."/>
            <person name="Wong C."/>
            <person name="Yamamura Y."/>
            <person name="Yuan S."/>
            <person name="Shinozaki K."/>
            <person name="Davis R.W."/>
            <person name="Theologis A."/>
            <person name="Ecker J.R."/>
        </authorList>
    </citation>
    <scope>NUCLEOTIDE SEQUENCE [LARGE SCALE MRNA]</scope>
    <source>
        <strain>cv. Columbia</strain>
    </source>
</reference>
<reference key="4">
    <citation type="journal article" date="2014" name="Plant Physiol.">
        <title>Endomembrane trafficking protein SEC24A regulates cell size patterning in Arabidopsis.</title>
        <authorList>
            <person name="Qu X."/>
            <person name="Chatty P.R."/>
            <person name="Roeder A.H.K."/>
        </authorList>
    </citation>
    <scope>GENE FAMILY</scope>
    <source>
        <strain>cv. Landsberg erecta</strain>
    </source>
</reference>
<reference key="5">
    <citation type="journal article" date="2014" name="PLoS ONE">
        <title>Study of the plant COPII vesicle coat subunits by functional complementation of yeast Saccharomyces cerevisiae mutants.</title>
        <authorList>
            <person name="De Craene J.-O."/>
            <person name="Courte F."/>
            <person name="Rinaldi B."/>
            <person name="Fitterer C."/>
            <person name="Herranz M.C."/>
            <person name="Schmitt-Keichinger C."/>
            <person name="Ritzenthaler C."/>
            <person name="Friant S."/>
        </authorList>
    </citation>
    <scope>GENE FAMILY</scope>
    <source>
        <strain>cv. Columbia</strain>
    </source>
</reference>
<reference key="6">
    <citation type="journal article" date="2016" name="Trends Plant Sci.">
        <title>COPII paralogs in plants: functional redundancy or diversity?</title>
        <authorList>
            <person name="Chung K.P."/>
            <person name="Zeng Y."/>
            <person name="Jiang L."/>
        </authorList>
    </citation>
    <scope>REVIEW ON COAT PROTEIN COMPLEX II (COPII) VESICLES</scope>
    <scope>GENE FAMILY</scope>
    <scope>NOMENCLATURE</scope>
</reference>
<reference key="7">
    <citation type="journal article" date="2018" name="J. Exp. Bot.">
        <title>The Arabidopsis COPII components, AtSEC23A and AtSEC23D, are essential for pollen wall development and exine patterning.</title>
        <authorList>
            <person name="Aboulela M."/>
            <person name="Nakagawa T."/>
            <person name="Oshima A."/>
            <person name="Nishimura K."/>
            <person name="Tanaka Y."/>
        </authorList>
    </citation>
    <scope>FUNCTION</scope>
    <scope>DISRUPTION PHENOTYPE</scope>
    <scope>TISSUE SPECIFICITY</scope>
    <scope>DEVELOPMENTAL STAGE</scope>
    <scope>SUBCELLULAR LOCATION</scope>
    <scope>GENE FAMILY</scope>
    <scope>NOMENCLATURE</scope>
    <source>
        <strain>cv. Columbia</strain>
    </source>
</reference>